<evidence type="ECO:0000255" key="1">
    <source>
        <dbReference type="HAMAP-Rule" id="MF_00113"/>
    </source>
</evidence>
<accession>A7HXM7</accession>
<comment type="function">
    <text evidence="1">Transfers and isomerizes the ribose moiety from AdoMet to the 7-aminomethyl group of 7-deazaguanine (preQ1-tRNA) to give epoxyqueuosine (oQ-tRNA).</text>
</comment>
<comment type="catalytic activity">
    <reaction evidence="1">
        <text>7-aminomethyl-7-carbaguanosine(34) in tRNA + S-adenosyl-L-methionine = epoxyqueuosine(34) in tRNA + adenine + L-methionine + 2 H(+)</text>
        <dbReference type="Rhea" id="RHEA:32155"/>
        <dbReference type="Rhea" id="RHEA-COMP:10342"/>
        <dbReference type="Rhea" id="RHEA-COMP:18582"/>
        <dbReference type="ChEBI" id="CHEBI:15378"/>
        <dbReference type="ChEBI" id="CHEBI:16708"/>
        <dbReference type="ChEBI" id="CHEBI:57844"/>
        <dbReference type="ChEBI" id="CHEBI:59789"/>
        <dbReference type="ChEBI" id="CHEBI:82833"/>
        <dbReference type="ChEBI" id="CHEBI:194443"/>
        <dbReference type="EC" id="2.4.99.17"/>
    </reaction>
</comment>
<comment type="pathway">
    <text evidence="1">tRNA modification; tRNA-queuosine biosynthesis.</text>
</comment>
<comment type="subunit">
    <text evidence="1">Monomer.</text>
</comment>
<comment type="subcellular location">
    <subcellularLocation>
        <location evidence="1">Cytoplasm</location>
    </subcellularLocation>
</comment>
<comment type="similarity">
    <text evidence="1">Belongs to the QueA family.</text>
</comment>
<proteinExistence type="inferred from homology"/>
<sequence>MRVSDFDFDLPEELIALRPARPRDSARMLVIGPAENALADKSVSDLPSHLREGDILVFNDTKVIPARLFGTRRRGEASARIEVMLHKRESADEWRAFLRPAKKLNLSETIDFPGGLSAAVEEKGEGGEAGLRFSLSGPALDAAIAAAGEMPLPPYIARKRAADDEDVADYQTLHADEPGAVAAPTAGLHFTPALMAAIEARGVSTVRLTLHVGAGTFLPVTAEDTDTHKMHAERGEITEAEAAAINEARAKGGRIVAVGTTSLRLLESAVDEAGTVHPFRGETDIFITPGYRFRAVDVLMTNFHLPRSTLFMLVSALRSTEEMKRAYAHAVAEKYRFYSYGDACLIYGAS</sequence>
<name>QUEA_PARL1</name>
<protein>
    <recommendedName>
        <fullName evidence="1">S-adenosylmethionine:tRNA ribosyltransferase-isomerase</fullName>
        <ecNumber evidence="1">2.4.99.17</ecNumber>
    </recommendedName>
    <alternativeName>
        <fullName evidence="1">Queuosine biosynthesis protein QueA</fullName>
    </alternativeName>
</protein>
<reference key="1">
    <citation type="journal article" date="2011" name="Stand. Genomic Sci.">
        <title>Complete genome sequence of Parvibaculum lavamentivorans type strain (DS-1(T)).</title>
        <authorList>
            <person name="Schleheck D."/>
            <person name="Weiss M."/>
            <person name="Pitluck S."/>
            <person name="Bruce D."/>
            <person name="Land M.L."/>
            <person name="Han S."/>
            <person name="Saunders E."/>
            <person name="Tapia R."/>
            <person name="Detter C."/>
            <person name="Brettin T."/>
            <person name="Han J."/>
            <person name="Woyke T."/>
            <person name="Goodwin L."/>
            <person name="Pennacchio L."/>
            <person name="Nolan M."/>
            <person name="Cook A.M."/>
            <person name="Kjelleberg S."/>
            <person name="Thomas T."/>
        </authorList>
    </citation>
    <scope>NUCLEOTIDE SEQUENCE [LARGE SCALE GENOMIC DNA]</scope>
    <source>
        <strain>DS-1 / DSM 13023 / NCIMB 13966</strain>
    </source>
</reference>
<organism>
    <name type="scientific">Parvibaculum lavamentivorans (strain DS-1 / DSM 13023 / NCIMB 13966)</name>
    <dbReference type="NCBI Taxonomy" id="402881"/>
    <lineage>
        <taxon>Bacteria</taxon>
        <taxon>Pseudomonadati</taxon>
        <taxon>Pseudomonadota</taxon>
        <taxon>Alphaproteobacteria</taxon>
        <taxon>Hyphomicrobiales</taxon>
        <taxon>Parvibaculaceae</taxon>
        <taxon>Parvibaculum</taxon>
    </lineage>
</organism>
<dbReference type="EC" id="2.4.99.17" evidence="1"/>
<dbReference type="EMBL" id="CP000774">
    <property type="protein sequence ID" value="ABS64660.1"/>
    <property type="molecule type" value="Genomic_DNA"/>
</dbReference>
<dbReference type="RefSeq" id="WP_012111981.1">
    <property type="nucleotide sequence ID" value="NC_009719.1"/>
</dbReference>
<dbReference type="SMR" id="A7HXM7"/>
<dbReference type="STRING" id="402881.Plav_3053"/>
<dbReference type="KEGG" id="pla:Plav_3053"/>
<dbReference type="eggNOG" id="COG0809">
    <property type="taxonomic scope" value="Bacteria"/>
</dbReference>
<dbReference type="HOGENOM" id="CLU_039110_1_1_5"/>
<dbReference type="OrthoDB" id="9805933at2"/>
<dbReference type="UniPathway" id="UPA00392"/>
<dbReference type="Proteomes" id="UP000006377">
    <property type="component" value="Chromosome"/>
</dbReference>
<dbReference type="GO" id="GO:0005737">
    <property type="term" value="C:cytoplasm"/>
    <property type="evidence" value="ECO:0007669"/>
    <property type="project" value="UniProtKB-SubCell"/>
</dbReference>
<dbReference type="GO" id="GO:0051075">
    <property type="term" value="F:S-adenosylmethionine:tRNA ribosyltransferase-isomerase activity"/>
    <property type="evidence" value="ECO:0007669"/>
    <property type="project" value="UniProtKB-EC"/>
</dbReference>
<dbReference type="GO" id="GO:0008616">
    <property type="term" value="P:queuosine biosynthetic process"/>
    <property type="evidence" value="ECO:0007669"/>
    <property type="project" value="UniProtKB-UniRule"/>
</dbReference>
<dbReference type="GO" id="GO:0002099">
    <property type="term" value="P:tRNA wobble guanine modification"/>
    <property type="evidence" value="ECO:0007669"/>
    <property type="project" value="TreeGrafter"/>
</dbReference>
<dbReference type="FunFam" id="3.40.1780.10:FF:000001">
    <property type="entry name" value="S-adenosylmethionine:tRNA ribosyltransferase-isomerase"/>
    <property type="match status" value="1"/>
</dbReference>
<dbReference type="Gene3D" id="2.40.10.240">
    <property type="entry name" value="QueA-like"/>
    <property type="match status" value="1"/>
</dbReference>
<dbReference type="Gene3D" id="3.40.1780.10">
    <property type="entry name" value="QueA-like"/>
    <property type="match status" value="1"/>
</dbReference>
<dbReference type="HAMAP" id="MF_00113">
    <property type="entry name" value="QueA"/>
    <property type="match status" value="1"/>
</dbReference>
<dbReference type="InterPro" id="IPR003699">
    <property type="entry name" value="QueA"/>
</dbReference>
<dbReference type="InterPro" id="IPR042118">
    <property type="entry name" value="QueA_dom1"/>
</dbReference>
<dbReference type="InterPro" id="IPR042119">
    <property type="entry name" value="QueA_dom2"/>
</dbReference>
<dbReference type="InterPro" id="IPR036100">
    <property type="entry name" value="QueA_sf"/>
</dbReference>
<dbReference type="NCBIfam" id="NF001140">
    <property type="entry name" value="PRK00147.1"/>
    <property type="match status" value="1"/>
</dbReference>
<dbReference type="NCBIfam" id="TIGR00113">
    <property type="entry name" value="queA"/>
    <property type="match status" value="1"/>
</dbReference>
<dbReference type="PANTHER" id="PTHR30307">
    <property type="entry name" value="S-ADENOSYLMETHIONINE:TRNA RIBOSYLTRANSFERASE-ISOMERASE"/>
    <property type="match status" value="1"/>
</dbReference>
<dbReference type="PANTHER" id="PTHR30307:SF0">
    <property type="entry name" value="S-ADENOSYLMETHIONINE:TRNA RIBOSYLTRANSFERASE-ISOMERASE"/>
    <property type="match status" value="1"/>
</dbReference>
<dbReference type="Pfam" id="PF02547">
    <property type="entry name" value="Queuosine_synth"/>
    <property type="match status" value="1"/>
</dbReference>
<dbReference type="SUPFAM" id="SSF111337">
    <property type="entry name" value="QueA-like"/>
    <property type="match status" value="1"/>
</dbReference>
<keyword id="KW-0963">Cytoplasm</keyword>
<keyword id="KW-0671">Queuosine biosynthesis</keyword>
<keyword id="KW-1185">Reference proteome</keyword>
<keyword id="KW-0949">S-adenosyl-L-methionine</keyword>
<keyword id="KW-0808">Transferase</keyword>
<feature type="chain" id="PRO_1000071340" description="S-adenosylmethionine:tRNA ribosyltransferase-isomerase">
    <location>
        <begin position="1"/>
        <end position="350"/>
    </location>
</feature>
<gene>
    <name evidence="1" type="primary">queA</name>
    <name type="ordered locus">Plav_3053</name>
</gene>